<dbReference type="EC" id="3.6.4.13"/>
<dbReference type="EMBL" id="CM002242">
    <property type="protein sequence ID" value="EAA30775.3"/>
    <property type="molecule type" value="Genomic_DNA"/>
</dbReference>
<dbReference type="RefSeq" id="XP_960011.3">
    <property type="nucleotide sequence ID" value="XM_954918.3"/>
</dbReference>
<dbReference type="SMR" id="Q7S5D9"/>
<dbReference type="FunCoup" id="Q7S5D9">
    <property type="interactions" value="1284"/>
</dbReference>
<dbReference type="STRING" id="367110.Q7S5D9"/>
<dbReference type="EnsemblFungi" id="EAA30775">
    <property type="protein sequence ID" value="EAA30775"/>
    <property type="gene ID" value="NCU06149"/>
</dbReference>
<dbReference type="GeneID" id="3876149"/>
<dbReference type="KEGG" id="ncr:NCU06149"/>
<dbReference type="VEuPathDB" id="FungiDB:NCU06149"/>
<dbReference type="HOGENOM" id="CLU_003041_30_0_1"/>
<dbReference type="InParanoid" id="Q7S5D9"/>
<dbReference type="OrthoDB" id="10265785at2759"/>
<dbReference type="Proteomes" id="UP000001805">
    <property type="component" value="Chromosome 7, Linkage Group VII"/>
</dbReference>
<dbReference type="GO" id="GO:0010494">
    <property type="term" value="C:cytoplasmic stress granule"/>
    <property type="evidence" value="ECO:0000318"/>
    <property type="project" value="GO_Central"/>
</dbReference>
<dbReference type="GO" id="GO:0000932">
    <property type="term" value="C:P-body"/>
    <property type="evidence" value="ECO:0000318"/>
    <property type="project" value="GO_Central"/>
</dbReference>
<dbReference type="GO" id="GO:0005524">
    <property type="term" value="F:ATP binding"/>
    <property type="evidence" value="ECO:0007669"/>
    <property type="project" value="UniProtKB-KW"/>
</dbReference>
<dbReference type="GO" id="GO:0016887">
    <property type="term" value="F:ATP hydrolysis activity"/>
    <property type="evidence" value="ECO:0007669"/>
    <property type="project" value="RHEA"/>
</dbReference>
<dbReference type="GO" id="GO:0003729">
    <property type="term" value="F:mRNA binding"/>
    <property type="evidence" value="ECO:0000318"/>
    <property type="project" value="GO_Central"/>
</dbReference>
<dbReference type="GO" id="GO:0003724">
    <property type="term" value="F:RNA helicase activity"/>
    <property type="evidence" value="ECO:0007669"/>
    <property type="project" value="UniProtKB-EC"/>
</dbReference>
<dbReference type="GO" id="GO:0006397">
    <property type="term" value="P:mRNA processing"/>
    <property type="evidence" value="ECO:0007669"/>
    <property type="project" value="UniProtKB-KW"/>
</dbReference>
<dbReference type="GO" id="GO:0051028">
    <property type="term" value="P:mRNA transport"/>
    <property type="evidence" value="ECO:0007669"/>
    <property type="project" value="UniProtKB-KW"/>
</dbReference>
<dbReference type="GO" id="GO:0017148">
    <property type="term" value="P:negative regulation of translation"/>
    <property type="evidence" value="ECO:0000318"/>
    <property type="project" value="GO_Central"/>
</dbReference>
<dbReference type="GO" id="GO:0033962">
    <property type="term" value="P:P-body assembly"/>
    <property type="evidence" value="ECO:0000318"/>
    <property type="project" value="GO_Central"/>
</dbReference>
<dbReference type="GO" id="GO:0034063">
    <property type="term" value="P:stress granule assembly"/>
    <property type="evidence" value="ECO:0000318"/>
    <property type="project" value="GO_Central"/>
</dbReference>
<dbReference type="CDD" id="cd17940">
    <property type="entry name" value="DEADc_DDX6"/>
    <property type="match status" value="1"/>
</dbReference>
<dbReference type="CDD" id="cd18787">
    <property type="entry name" value="SF2_C_DEAD"/>
    <property type="match status" value="1"/>
</dbReference>
<dbReference type="FunFam" id="3.40.50.300:FF:000114">
    <property type="entry name" value="ATP-dependent RNA helicase DDX6"/>
    <property type="match status" value="1"/>
</dbReference>
<dbReference type="Gene3D" id="3.40.50.300">
    <property type="entry name" value="P-loop containing nucleotide triphosphate hydrolases"/>
    <property type="match status" value="2"/>
</dbReference>
<dbReference type="InterPro" id="IPR011545">
    <property type="entry name" value="DEAD/DEAH_box_helicase_dom"/>
</dbReference>
<dbReference type="InterPro" id="IPR014001">
    <property type="entry name" value="Helicase_ATP-bd"/>
</dbReference>
<dbReference type="InterPro" id="IPR001650">
    <property type="entry name" value="Helicase_C-like"/>
</dbReference>
<dbReference type="InterPro" id="IPR027417">
    <property type="entry name" value="P-loop_NTPase"/>
</dbReference>
<dbReference type="InterPro" id="IPR000629">
    <property type="entry name" value="RNA-helicase_DEAD-box_CS"/>
</dbReference>
<dbReference type="InterPro" id="IPR014014">
    <property type="entry name" value="RNA_helicase_DEAD_Q_motif"/>
</dbReference>
<dbReference type="PANTHER" id="PTHR47960">
    <property type="entry name" value="DEAD-BOX ATP-DEPENDENT RNA HELICASE 50"/>
    <property type="match status" value="1"/>
</dbReference>
<dbReference type="Pfam" id="PF00270">
    <property type="entry name" value="DEAD"/>
    <property type="match status" value="1"/>
</dbReference>
<dbReference type="Pfam" id="PF00271">
    <property type="entry name" value="Helicase_C"/>
    <property type="match status" value="1"/>
</dbReference>
<dbReference type="SMART" id="SM00487">
    <property type="entry name" value="DEXDc"/>
    <property type="match status" value="1"/>
</dbReference>
<dbReference type="SMART" id="SM00490">
    <property type="entry name" value="HELICc"/>
    <property type="match status" value="1"/>
</dbReference>
<dbReference type="SUPFAM" id="SSF52540">
    <property type="entry name" value="P-loop containing nucleoside triphosphate hydrolases"/>
    <property type="match status" value="1"/>
</dbReference>
<dbReference type="PROSITE" id="PS00039">
    <property type="entry name" value="DEAD_ATP_HELICASE"/>
    <property type="match status" value="1"/>
</dbReference>
<dbReference type="PROSITE" id="PS51192">
    <property type="entry name" value="HELICASE_ATP_BIND_1"/>
    <property type="match status" value="1"/>
</dbReference>
<dbReference type="PROSITE" id="PS51194">
    <property type="entry name" value="HELICASE_CTER"/>
    <property type="match status" value="1"/>
</dbReference>
<dbReference type="PROSITE" id="PS51195">
    <property type="entry name" value="Q_MOTIF"/>
    <property type="match status" value="1"/>
</dbReference>
<protein>
    <recommendedName>
        <fullName>ATP-dependent RNA helicase dhh1</fullName>
        <ecNumber>3.6.4.13</ecNumber>
    </recommendedName>
    <alternativeName>
        <fullName>DEAD box RNA helicase 10</fullName>
    </alternativeName>
</protein>
<proteinExistence type="inferred from homology"/>
<gene>
    <name type="primary">drh-10</name>
    <name type="synonym">dhh1</name>
    <name type="ORF">NCU06149</name>
</gene>
<reference key="1">
    <citation type="journal article" date="2003" name="Nature">
        <title>The genome sequence of the filamentous fungus Neurospora crassa.</title>
        <authorList>
            <person name="Galagan J.E."/>
            <person name="Calvo S.E."/>
            <person name="Borkovich K.A."/>
            <person name="Selker E.U."/>
            <person name="Read N.D."/>
            <person name="Jaffe D.B."/>
            <person name="FitzHugh W."/>
            <person name="Ma L.-J."/>
            <person name="Smirnov S."/>
            <person name="Purcell S."/>
            <person name="Rehman B."/>
            <person name="Elkins T."/>
            <person name="Engels R."/>
            <person name="Wang S."/>
            <person name="Nielsen C.B."/>
            <person name="Butler J."/>
            <person name="Endrizzi M."/>
            <person name="Qui D."/>
            <person name="Ianakiev P."/>
            <person name="Bell-Pedersen D."/>
            <person name="Nelson M.A."/>
            <person name="Werner-Washburne M."/>
            <person name="Selitrennikoff C.P."/>
            <person name="Kinsey J.A."/>
            <person name="Braun E.L."/>
            <person name="Zelter A."/>
            <person name="Schulte U."/>
            <person name="Kothe G.O."/>
            <person name="Jedd G."/>
            <person name="Mewes H.-W."/>
            <person name="Staben C."/>
            <person name="Marcotte E."/>
            <person name="Greenberg D."/>
            <person name="Roy A."/>
            <person name="Foley K."/>
            <person name="Naylor J."/>
            <person name="Stange-Thomann N."/>
            <person name="Barrett R."/>
            <person name="Gnerre S."/>
            <person name="Kamal M."/>
            <person name="Kamvysselis M."/>
            <person name="Mauceli E.W."/>
            <person name="Bielke C."/>
            <person name="Rudd S."/>
            <person name="Frishman D."/>
            <person name="Krystofova S."/>
            <person name="Rasmussen C."/>
            <person name="Metzenberg R.L."/>
            <person name="Perkins D.D."/>
            <person name="Kroken S."/>
            <person name="Cogoni C."/>
            <person name="Macino G."/>
            <person name="Catcheside D.E.A."/>
            <person name="Li W."/>
            <person name="Pratt R.J."/>
            <person name="Osmani S.A."/>
            <person name="DeSouza C.P.C."/>
            <person name="Glass N.L."/>
            <person name="Orbach M.J."/>
            <person name="Berglund J.A."/>
            <person name="Voelker R."/>
            <person name="Yarden O."/>
            <person name="Plamann M."/>
            <person name="Seiler S."/>
            <person name="Dunlap J.C."/>
            <person name="Radford A."/>
            <person name="Aramayo R."/>
            <person name="Natvig D.O."/>
            <person name="Alex L.A."/>
            <person name="Mannhaupt G."/>
            <person name="Ebbole D.J."/>
            <person name="Freitag M."/>
            <person name="Paulsen I."/>
            <person name="Sachs M.S."/>
            <person name="Lander E.S."/>
            <person name="Nusbaum C."/>
            <person name="Birren B.W."/>
        </authorList>
    </citation>
    <scope>NUCLEOTIDE SEQUENCE [LARGE SCALE GENOMIC DNA]</scope>
    <source>
        <strain>ATCC 24698 / 74-OR23-1A / CBS 708.71 / DSM 1257 / FGSC 987</strain>
    </source>
</reference>
<comment type="function">
    <text evidence="1">ATP-dependent RNA helicase involved in mRNA turnover, and more specifically in mRNA decapping. Is involved in G1/S DNA-damage checkpoint recovery, probably through the regulation of the translational status of a subset of mRNAs. May also have a role in translation and mRNA nuclear export (By similarity).</text>
</comment>
<comment type="catalytic activity">
    <reaction>
        <text>ATP + H2O = ADP + phosphate + H(+)</text>
        <dbReference type="Rhea" id="RHEA:13065"/>
        <dbReference type="ChEBI" id="CHEBI:15377"/>
        <dbReference type="ChEBI" id="CHEBI:15378"/>
        <dbReference type="ChEBI" id="CHEBI:30616"/>
        <dbReference type="ChEBI" id="CHEBI:43474"/>
        <dbReference type="ChEBI" id="CHEBI:456216"/>
        <dbReference type="EC" id="3.6.4.13"/>
    </reaction>
</comment>
<comment type="subcellular location">
    <subcellularLocation>
        <location evidence="1">Cytoplasm</location>
        <location evidence="1">P-body</location>
    </subcellularLocation>
    <text evidence="1">Is concentrated in several cytoplasmic foci called P bodies (or cytoplasmic processing bodies) which represent sites of mRNA decapping and 5' to 3' exonucleotidic decay.</text>
</comment>
<comment type="domain">
    <text>The Q motif is unique to and characteristic of the DEAD box family of RNA helicases and controls ATP binding and hydrolysis.</text>
</comment>
<comment type="similarity">
    <text evidence="5">Belongs to the DEAD box helicase family. DDX6/DHH1 subfamily.</text>
</comment>
<sequence>MSDQLADQLKATSLSSGPEDWKKGLNLPARDTRQQTEDVTNTRGLDWEDFIHDRDLLMGIFEAGFEKPSPIQEEAIPVALTGRDILARAKNGTGKTAAFVIPALNKINPKVSKIQCLILVPTRELAMQTSQVCKTLGKHLGINVMVTTGGTGLRDDIVRLQDPVHIVVGTPGRILDLAGKQVADLSECPMFIMDEADKLLSQEFTPVIEQLLQFHPKDRQVMLFSATFPLSVKDFSDKNMTSPYEINLMDELTLRGITQYYAFVEEKQKVHCLNTLFSKLQINQSIIFCNSTNRVELLAKKITELGYSCFYSHAKMAQQARNRVFHDFRNGVCRNLVCSDLLTRGIDIQAVNVVINFDFPKNAETYLHRIGRSGRYGHLGLAINLINWDDRFNLYNIERDLGTEIQPIPQTIDKSLYVYENPESIPRPISTFKPIAQQPQQQLQQSQRPQQSQQQQHFSTQTQPSNQLPPQQGNQQLGFNPQAQQPHRPIPQAQGDWQGQNGRQNGTGASNNQPRPTNYQNNRGQPGSSRGGRGRGFQGQGGRQNQNYGGQRGPRTQGQGQPQGPLSAQ</sequence>
<accession>Q7S5D9</accession>
<organism>
    <name type="scientific">Neurospora crassa (strain ATCC 24698 / 74-OR23-1A / CBS 708.71 / DSM 1257 / FGSC 987)</name>
    <dbReference type="NCBI Taxonomy" id="367110"/>
    <lineage>
        <taxon>Eukaryota</taxon>
        <taxon>Fungi</taxon>
        <taxon>Dikarya</taxon>
        <taxon>Ascomycota</taxon>
        <taxon>Pezizomycotina</taxon>
        <taxon>Sordariomycetes</taxon>
        <taxon>Sordariomycetidae</taxon>
        <taxon>Sordariales</taxon>
        <taxon>Sordariaceae</taxon>
        <taxon>Neurospora</taxon>
    </lineage>
</organism>
<keyword id="KW-0067">ATP-binding</keyword>
<keyword id="KW-0963">Cytoplasm</keyword>
<keyword id="KW-0347">Helicase</keyword>
<keyword id="KW-0378">Hydrolase</keyword>
<keyword id="KW-0507">mRNA processing</keyword>
<keyword id="KW-0509">mRNA transport</keyword>
<keyword id="KW-0547">Nucleotide-binding</keyword>
<keyword id="KW-1185">Reference proteome</keyword>
<keyword id="KW-0694">RNA-binding</keyword>
<keyword id="KW-0810">Translation regulation</keyword>
<keyword id="KW-0813">Transport</keyword>
<evidence type="ECO:0000250" key="1"/>
<evidence type="ECO:0000255" key="2">
    <source>
        <dbReference type="PROSITE-ProRule" id="PRU00541"/>
    </source>
</evidence>
<evidence type="ECO:0000255" key="3">
    <source>
        <dbReference type="PROSITE-ProRule" id="PRU00542"/>
    </source>
</evidence>
<evidence type="ECO:0000256" key="4">
    <source>
        <dbReference type="SAM" id="MobiDB-lite"/>
    </source>
</evidence>
<evidence type="ECO:0000305" key="5"/>
<name>DHH1_NEUCR</name>
<feature type="chain" id="PRO_0000232192" description="ATP-dependent RNA helicase dhh1">
    <location>
        <begin position="1"/>
        <end position="569"/>
    </location>
</feature>
<feature type="domain" description="Helicase ATP-binding" evidence="2">
    <location>
        <begin position="76"/>
        <end position="246"/>
    </location>
</feature>
<feature type="domain" description="Helicase C-terminal" evidence="3">
    <location>
        <begin position="256"/>
        <end position="416"/>
    </location>
</feature>
<feature type="region of interest" description="Disordered" evidence="4">
    <location>
        <begin position="1"/>
        <end position="39"/>
    </location>
</feature>
<feature type="region of interest" description="Disordered" evidence="4">
    <location>
        <begin position="436"/>
        <end position="569"/>
    </location>
</feature>
<feature type="short sequence motif" description="Q motif">
    <location>
        <begin position="45"/>
        <end position="73"/>
    </location>
</feature>
<feature type="short sequence motif" description="DEAD box">
    <location>
        <begin position="194"/>
        <end position="197"/>
    </location>
</feature>
<feature type="compositionally biased region" description="Polar residues" evidence="4">
    <location>
        <begin position="1"/>
        <end position="16"/>
    </location>
</feature>
<feature type="compositionally biased region" description="Low complexity" evidence="4">
    <location>
        <begin position="437"/>
        <end position="482"/>
    </location>
</feature>
<feature type="compositionally biased region" description="Polar residues" evidence="4">
    <location>
        <begin position="495"/>
        <end position="520"/>
    </location>
</feature>
<feature type="compositionally biased region" description="Gly residues" evidence="4">
    <location>
        <begin position="529"/>
        <end position="542"/>
    </location>
</feature>
<feature type="compositionally biased region" description="Low complexity" evidence="4">
    <location>
        <begin position="543"/>
        <end position="569"/>
    </location>
</feature>
<feature type="binding site" evidence="2">
    <location>
        <begin position="89"/>
        <end position="96"/>
    </location>
    <ligand>
        <name>ATP</name>
        <dbReference type="ChEBI" id="CHEBI:30616"/>
    </ligand>
</feature>